<keyword id="KW-0067">ATP-binding</keyword>
<keyword id="KW-0119">Carbohydrate metabolism</keyword>
<keyword id="KW-0418">Kinase</keyword>
<keyword id="KW-0511">Multifunctional enzyme</keyword>
<keyword id="KW-0547">Nucleotide-binding</keyword>
<keyword id="KW-0548">Nucleotidyltransferase</keyword>
<keyword id="KW-1185">Reference proteome</keyword>
<keyword id="KW-0808">Transferase</keyword>
<organism>
    <name type="scientific">Bradyrhizobium sp. (strain ORS 278)</name>
    <dbReference type="NCBI Taxonomy" id="114615"/>
    <lineage>
        <taxon>Bacteria</taxon>
        <taxon>Pseudomonadati</taxon>
        <taxon>Pseudomonadota</taxon>
        <taxon>Alphaproteobacteria</taxon>
        <taxon>Hyphomicrobiales</taxon>
        <taxon>Nitrobacteraceae</taxon>
        <taxon>Bradyrhizobium</taxon>
    </lineage>
</organism>
<protein>
    <recommendedName>
        <fullName evidence="1">Bifunctional protein HldE</fullName>
    </recommendedName>
    <domain>
        <recommendedName>
            <fullName evidence="1">D-beta-D-heptose 7-phosphate kinase</fullName>
            <ecNumber evidence="1">2.7.1.167</ecNumber>
        </recommendedName>
        <alternativeName>
            <fullName evidence="1">D-beta-D-heptose 7-phosphotransferase</fullName>
        </alternativeName>
        <alternativeName>
            <fullName evidence="1">D-glycero-beta-D-manno-heptose-7-phosphate kinase</fullName>
        </alternativeName>
    </domain>
    <domain>
        <recommendedName>
            <fullName evidence="1">D-beta-D-heptose 1-phosphate adenylyltransferase</fullName>
            <ecNumber evidence="1">2.7.7.70</ecNumber>
        </recommendedName>
        <alternativeName>
            <fullName evidence="1">D-glycero-beta-D-manno-heptose 1-phosphate adenylyltransferase</fullName>
        </alternativeName>
    </domain>
</protein>
<name>HLDE_BRASO</name>
<accession>A4YYB6</accession>
<feature type="chain" id="PRO_1000069398" description="Bifunctional protein HldE">
    <location>
        <begin position="1"/>
        <end position="490"/>
    </location>
</feature>
<feature type="region of interest" description="Ribokinase">
    <location>
        <begin position="1"/>
        <end position="330"/>
    </location>
</feature>
<feature type="region of interest" description="Cytidylyltransferase">
    <location>
        <begin position="358"/>
        <end position="490"/>
    </location>
</feature>
<feature type="active site" evidence="1">
    <location>
        <position position="275"/>
    </location>
</feature>
<feature type="binding site" evidence="1">
    <location>
        <begin position="205"/>
        <end position="208"/>
    </location>
    <ligand>
        <name>ATP</name>
        <dbReference type="ChEBI" id="CHEBI:30616"/>
    </ligand>
</feature>
<evidence type="ECO:0000255" key="1">
    <source>
        <dbReference type="HAMAP-Rule" id="MF_01603"/>
    </source>
</evidence>
<sequence length="490" mass="52471">MFDFDDLSQAIARQTVLCVGDLMLDEFVYGEVSRISPEAPAPVIAVQRSETNIGGAGNVARNIAALGARGIFVGLVGQDAAGDQLEAELAKVDGIESVLVRDPSRPTTRKVRFVSEHFSTHMLRADWERAAPASEDIEQKLIAAILPLIARADIVLLSDYAKGVLTARVLRNVIDATRRAGKRVIVDPKSANLAIYRGASVLTPNRKEFSEATRSRAETEQEIAAAAQDAIYLADCEAILVTQSERGMTLVPRQGDPIHVPAYPVKVRDVSGAGDTVVAVLAAALAAGAAWEDALRMASAAAAVAVSKQGTASVTSAELRRKILPHAYRAAEEKIIENDGELATRVAVWRSEGLRVGFTNGCFDILHPGHVKVLTAARAACDRLVVGLNSDTSVKRLKGESRPVQDERARAEVLAALEAVDLVAIFTEETPLRLIELVRPSVLVKGGDYTREQVVGHEVVEAAGGEVLLIDILKGHSTTALVDRARSDQR</sequence>
<comment type="function">
    <text evidence="1">Catalyzes the phosphorylation of D-glycero-D-manno-heptose 7-phosphate at the C-1 position to selectively form D-glycero-beta-D-manno-heptose-1,7-bisphosphate.</text>
</comment>
<comment type="function">
    <text evidence="1">Catalyzes the ADP transfer from ATP to D-glycero-beta-D-manno-heptose 1-phosphate, yielding ADP-D-glycero-beta-D-manno-heptose.</text>
</comment>
<comment type="catalytic activity">
    <reaction evidence="1">
        <text>D-glycero-beta-D-manno-heptose 7-phosphate + ATP = D-glycero-beta-D-manno-heptose 1,7-bisphosphate + ADP + H(+)</text>
        <dbReference type="Rhea" id="RHEA:27473"/>
        <dbReference type="ChEBI" id="CHEBI:15378"/>
        <dbReference type="ChEBI" id="CHEBI:30616"/>
        <dbReference type="ChEBI" id="CHEBI:60204"/>
        <dbReference type="ChEBI" id="CHEBI:60208"/>
        <dbReference type="ChEBI" id="CHEBI:456216"/>
        <dbReference type="EC" id="2.7.1.167"/>
    </reaction>
</comment>
<comment type="catalytic activity">
    <reaction evidence="1">
        <text>D-glycero-beta-D-manno-heptose 1-phosphate + ATP + H(+) = ADP-D-glycero-beta-D-manno-heptose + diphosphate</text>
        <dbReference type="Rhea" id="RHEA:27465"/>
        <dbReference type="ChEBI" id="CHEBI:15378"/>
        <dbReference type="ChEBI" id="CHEBI:30616"/>
        <dbReference type="ChEBI" id="CHEBI:33019"/>
        <dbReference type="ChEBI" id="CHEBI:59967"/>
        <dbReference type="ChEBI" id="CHEBI:61593"/>
        <dbReference type="EC" id="2.7.7.70"/>
    </reaction>
</comment>
<comment type="pathway">
    <text evidence="1">Nucleotide-sugar biosynthesis; ADP-L-glycero-beta-D-manno-heptose biosynthesis; ADP-L-glycero-beta-D-manno-heptose from D-glycero-beta-D-manno-heptose 7-phosphate: step 1/4.</text>
</comment>
<comment type="pathway">
    <text evidence="1">Nucleotide-sugar biosynthesis; ADP-L-glycero-beta-D-manno-heptose biosynthesis; ADP-L-glycero-beta-D-manno-heptose from D-glycero-beta-D-manno-heptose 7-phosphate: step 3/4.</text>
</comment>
<comment type="subunit">
    <text evidence="1">Homodimer.</text>
</comment>
<comment type="similarity">
    <text evidence="1">In the N-terminal section; belongs to the carbohydrate kinase PfkB family.</text>
</comment>
<comment type="similarity">
    <text evidence="1">In the C-terminal section; belongs to the cytidylyltransferase family.</text>
</comment>
<gene>
    <name evidence="1" type="primary">hldE</name>
    <name type="ordered locus">BRADO5201</name>
</gene>
<reference key="1">
    <citation type="journal article" date="2007" name="Science">
        <title>Legumes symbioses: absence of nod genes in photosynthetic bradyrhizobia.</title>
        <authorList>
            <person name="Giraud E."/>
            <person name="Moulin L."/>
            <person name="Vallenet D."/>
            <person name="Barbe V."/>
            <person name="Cytryn E."/>
            <person name="Avarre J.-C."/>
            <person name="Jaubert M."/>
            <person name="Simon D."/>
            <person name="Cartieaux F."/>
            <person name="Prin Y."/>
            <person name="Bena G."/>
            <person name="Hannibal L."/>
            <person name="Fardoux J."/>
            <person name="Kojadinovic M."/>
            <person name="Vuillet L."/>
            <person name="Lajus A."/>
            <person name="Cruveiller S."/>
            <person name="Rouy Z."/>
            <person name="Mangenot S."/>
            <person name="Segurens B."/>
            <person name="Dossat C."/>
            <person name="Franck W.L."/>
            <person name="Chang W.-S."/>
            <person name="Saunders E."/>
            <person name="Bruce D."/>
            <person name="Richardson P."/>
            <person name="Normand P."/>
            <person name="Dreyfus B."/>
            <person name="Pignol D."/>
            <person name="Stacey G."/>
            <person name="Emerich D."/>
            <person name="Vermeglio A."/>
            <person name="Medigue C."/>
            <person name="Sadowsky M."/>
        </authorList>
    </citation>
    <scope>NUCLEOTIDE SEQUENCE [LARGE SCALE GENOMIC DNA]</scope>
    <source>
        <strain>ORS 278</strain>
    </source>
</reference>
<dbReference type="EC" id="2.7.1.167" evidence="1"/>
<dbReference type="EC" id="2.7.7.70" evidence="1"/>
<dbReference type="EMBL" id="CU234118">
    <property type="protein sequence ID" value="CAL78892.1"/>
    <property type="molecule type" value="Genomic_DNA"/>
</dbReference>
<dbReference type="RefSeq" id="WP_012028828.1">
    <property type="nucleotide sequence ID" value="NC_009445.1"/>
</dbReference>
<dbReference type="SMR" id="A4YYB6"/>
<dbReference type="STRING" id="114615.BRADO5201"/>
<dbReference type="KEGG" id="bra:BRADO5201"/>
<dbReference type="eggNOG" id="COG0615">
    <property type="taxonomic scope" value="Bacteria"/>
</dbReference>
<dbReference type="eggNOG" id="COG2870">
    <property type="taxonomic scope" value="Bacteria"/>
</dbReference>
<dbReference type="HOGENOM" id="CLU_021150_2_1_5"/>
<dbReference type="OrthoDB" id="9802794at2"/>
<dbReference type="UniPathway" id="UPA00356">
    <property type="reaction ID" value="UER00437"/>
</dbReference>
<dbReference type="UniPathway" id="UPA00356">
    <property type="reaction ID" value="UER00439"/>
</dbReference>
<dbReference type="Proteomes" id="UP000001994">
    <property type="component" value="Chromosome"/>
</dbReference>
<dbReference type="GO" id="GO:0005829">
    <property type="term" value="C:cytosol"/>
    <property type="evidence" value="ECO:0007669"/>
    <property type="project" value="TreeGrafter"/>
</dbReference>
<dbReference type="GO" id="GO:0005524">
    <property type="term" value="F:ATP binding"/>
    <property type="evidence" value="ECO:0007669"/>
    <property type="project" value="UniProtKB-UniRule"/>
</dbReference>
<dbReference type="GO" id="GO:0033785">
    <property type="term" value="F:heptose 7-phosphate kinase activity"/>
    <property type="evidence" value="ECO:0007669"/>
    <property type="project" value="UniProtKB-UniRule"/>
</dbReference>
<dbReference type="GO" id="GO:0033786">
    <property type="term" value="F:heptose-1-phosphate adenylyltransferase activity"/>
    <property type="evidence" value="ECO:0007669"/>
    <property type="project" value="UniProtKB-UniRule"/>
</dbReference>
<dbReference type="GO" id="GO:0016773">
    <property type="term" value="F:phosphotransferase activity, alcohol group as acceptor"/>
    <property type="evidence" value="ECO:0007669"/>
    <property type="project" value="InterPro"/>
</dbReference>
<dbReference type="GO" id="GO:0097171">
    <property type="term" value="P:ADP-L-glycero-beta-D-manno-heptose biosynthetic process"/>
    <property type="evidence" value="ECO:0007669"/>
    <property type="project" value="UniProtKB-UniPathway"/>
</dbReference>
<dbReference type="CDD" id="cd01172">
    <property type="entry name" value="RfaE_like"/>
    <property type="match status" value="1"/>
</dbReference>
<dbReference type="Gene3D" id="3.40.1190.20">
    <property type="match status" value="1"/>
</dbReference>
<dbReference type="Gene3D" id="3.40.50.620">
    <property type="entry name" value="HUPs"/>
    <property type="match status" value="1"/>
</dbReference>
<dbReference type="HAMAP" id="MF_01603">
    <property type="entry name" value="HldE"/>
    <property type="match status" value="1"/>
</dbReference>
<dbReference type="InterPro" id="IPR023030">
    <property type="entry name" value="Bifunc_HldE"/>
</dbReference>
<dbReference type="InterPro" id="IPR002173">
    <property type="entry name" value="Carboh/pur_kinase_PfkB_CS"/>
</dbReference>
<dbReference type="InterPro" id="IPR004821">
    <property type="entry name" value="Cyt_trans-like"/>
</dbReference>
<dbReference type="InterPro" id="IPR011611">
    <property type="entry name" value="PfkB_dom"/>
</dbReference>
<dbReference type="InterPro" id="IPR011913">
    <property type="entry name" value="RfaE_dom_I"/>
</dbReference>
<dbReference type="InterPro" id="IPR011914">
    <property type="entry name" value="RfaE_dom_II"/>
</dbReference>
<dbReference type="InterPro" id="IPR029056">
    <property type="entry name" value="Ribokinase-like"/>
</dbReference>
<dbReference type="InterPro" id="IPR014729">
    <property type="entry name" value="Rossmann-like_a/b/a_fold"/>
</dbReference>
<dbReference type="NCBIfam" id="TIGR00125">
    <property type="entry name" value="cyt_tran_rel"/>
    <property type="match status" value="1"/>
</dbReference>
<dbReference type="NCBIfam" id="TIGR02198">
    <property type="entry name" value="rfaE_dom_I"/>
    <property type="match status" value="1"/>
</dbReference>
<dbReference type="NCBIfam" id="TIGR02199">
    <property type="entry name" value="rfaE_dom_II"/>
    <property type="match status" value="1"/>
</dbReference>
<dbReference type="PANTHER" id="PTHR46969">
    <property type="entry name" value="BIFUNCTIONAL PROTEIN HLDE"/>
    <property type="match status" value="1"/>
</dbReference>
<dbReference type="PANTHER" id="PTHR46969:SF1">
    <property type="entry name" value="BIFUNCTIONAL PROTEIN HLDE"/>
    <property type="match status" value="1"/>
</dbReference>
<dbReference type="Pfam" id="PF01467">
    <property type="entry name" value="CTP_transf_like"/>
    <property type="match status" value="1"/>
</dbReference>
<dbReference type="Pfam" id="PF00294">
    <property type="entry name" value="PfkB"/>
    <property type="match status" value="1"/>
</dbReference>
<dbReference type="SUPFAM" id="SSF52374">
    <property type="entry name" value="Nucleotidylyl transferase"/>
    <property type="match status" value="1"/>
</dbReference>
<dbReference type="SUPFAM" id="SSF53613">
    <property type="entry name" value="Ribokinase-like"/>
    <property type="match status" value="1"/>
</dbReference>
<dbReference type="PROSITE" id="PS00583">
    <property type="entry name" value="PFKB_KINASES_1"/>
    <property type="match status" value="1"/>
</dbReference>
<proteinExistence type="inferred from homology"/>